<accession>Q6R7K8</accession>
<sequence length="214" mass="25747">MTMYIGLILVVLATFCQGEVVRECTFKAYLNDYLSDRTYGLLPCRYFEHGVLPKETLVVDISPNDTQGLWDECGKSDEYPCRFRDKLYWKKAYYWREKHGRSPHVPYPYCDDNEGVKPCYYYNKLMRFDQSRSVNFRSDHVWPVCDDINTDFIDEMPKPCQYNNRLYWGAKQYRMHTGKTRKPPRITNIFIRRRQGINGRLSTKPRRFKQWNLN</sequence>
<keyword id="KW-0325">Glycoprotein</keyword>
<keyword id="KW-1185">Reference proteome</keyword>
<keyword id="KW-0732">Signal</keyword>
<reference key="1">
    <citation type="journal article" date="2005" name="J. Gen. Virol.">
        <title>A novel class of herpesvirus with bivalve hosts.</title>
        <authorList>
            <person name="Davison A.J."/>
            <person name="Trus B.L."/>
            <person name="Cheng N."/>
            <person name="Steven A.C."/>
            <person name="Watson M.S."/>
            <person name="Cunningham C."/>
            <person name="Le Deuff R.M."/>
            <person name="Renault T."/>
        </authorList>
    </citation>
    <scope>NUCLEOTIDE SEQUENCE [LARGE SCALE GENOMIC DNA]</scope>
</reference>
<gene>
    <name type="ORF">ORF15</name>
</gene>
<organismHost>
    <name type="scientific">Magallana gigas</name>
    <name type="common">Pacific oyster</name>
    <name type="synonym">Crassostrea gigas</name>
    <dbReference type="NCBI Taxonomy" id="29159"/>
</organismHost>
<organismHost>
    <name type="scientific">Pecten maximus</name>
    <name type="common">King scallop</name>
    <name type="synonym">Pilgrim's clam</name>
    <dbReference type="NCBI Taxonomy" id="6579"/>
</organismHost>
<name>Y015_OSHVF</name>
<feature type="signal peptide" evidence="1">
    <location>
        <begin position="1"/>
        <end position="18"/>
    </location>
</feature>
<feature type="chain" id="PRO_0000385047" description="Uncharacterized protein ORF15">
    <location>
        <begin position="19"/>
        <end position="214"/>
    </location>
</feature>
<feature type="glycosylation site" description="N-linked (GlcNAc...) asparagine; by host" evidence="1">
    <location>
        <position position="64"/>
    </location>
</feature>
<organism>
    <name type="scientific">Ostreid herpesvirus 1 (isolate France)</name>
    <name type="common">OsHV-1</name>
    <name type="synonym">Pacific oyster herpesvirus</name>
    <dbReference type="NCBI Taxonomy" id="654903"/>
    <lineage>
        <taxon>Viruses</taxon>
        <taxon>Duplodnaviria</taxon>
        <taxon>Heunggongvirae</taxon>
        <taxon>Peploviricota</taxon>
        <taxon>Herviviricetes</taxon>
        <taxon>Herpesvirales</taxon>
        <taxon>Malacoherpesviridae</taxon>
        <taxon>Ostreavirus</taxon>
        <taxon>Ostreavirus ostreidmalaco1</taxon>
        <taxon>Ostreid herpesvirus 1</taxon>
    </lineage>
</organism>
<proteinExistence type="inferred from homology"/>
<evidence type="ECO:0000255" key="1"/>
<protein>
    <recommendedName>
        <fullName>Uncharacterized protein ORF15</fullName>
    </recommendedName>
</protein>
<dbReference type="EMBL" id="AY509253">
    <property type="protein sequence ID" value="AAS00907.1"/>
    <property type="molecule type" value="Genomic_DNA"/>
</dbReference>
<dbReference type="RefSeq" id="YP_024560.1">
    <property type="nucleotide sequence ID" value="NC_005881.2"/>
</dbReference>
<dbReference type="KEGG" id="vg:2948216"/>
<dbReference type="Proteomes" id="UP000007021">
    <property type="component" value="Segment"/>
</dbReference>